<gene>
    <name type="primary">use1</name>
    <name type="ORF">SPAC17G6.07c</name>
</gene>
<proteinExistence type="inferred from homology"/>
<evidence type="ECO:0000250" key="1"/>
<evidence type="ECO:0000255" key="2"/>
<evidence type="ECO:0000305" key="3"/>
<reference key="1">
    <citation type="journal article" date="2002" name="Nature">
        <title>The genome sequence of Schizosaccharomyces pombe.</title>
        <authorList>
            <person name="Wood V."/>
            <person name="Gwilliam R."/>
            <person name="Rajandream M.A."/>
            <person name="Lyne M.H."/>
            <person name="Lyne R."/>
            <person name="Stewart A."/>
            <person name="Sgouros J.G."/>
            <person name="Peat N."/>
            <person name="Hayles J."/>
            <person name="Baker S.G."/>
            <person name="Basham D."/>
            <person name="Bowman S."/>
            <person name="Brooks K."/>
            <person name="Brown D."/>
            <person name="Brown S."/>
            <person name="Chillingworth T."/>
            <person name="Churcher C.M."/>
            <person name="Collins M."/>
            <person name="Connor R."/>
            <person name="Cronin A."/>
            <person name="Davis P."/>
            <person name="Feltwell T."/>
            <person name="Fraser A."/>
            <person name="Gentles S."/>
            <person name="Goble A."/>
            <person name="Hamlin N."/>
            <person name="Harris D.E."/>
            <person name="Hidalgo J."/>
            <person name="Hodgson G."/>
            <person name="Holroyd S."/>
            <person name="Hornsby T."/>
            <person name="Howarth S."/>
            <person name="Huckle E.J."/>
            <person name="Hunt S."/>
            <person name="Jagels K."/>
            <person name="James K.D."/>
            <person name="Jones L."/>
            <person name="Jones M."/>
            <person name="Leather S."/>
            <person name="McDonald S."/>
            <person name="McLean J."/>
            <person name="Mooney P."/>
            <person name="Moule S."/>
            <person name="Mungall K.L."/>
            <person name="Murphy L.D."/>
            <person name="Niblett D."/>
            <person name="Odell C."/>
            <person name="Oliver K."/>
            <person name="O'Neil S."/>
            <person name="Pearson D."/>
            <person name="Quail M.A."/>
            <person name="Rabbinowitsch E."/>
            <person name="Rutherford K.M."/>
            <person name="Rutter S."/>
            <person name="Saunders D."/>
            <person name="Seeger K."/>
            <person name="Sharp S."/>
            <person name="Skelton J."/>
            <person name="Simmonds M.N."/>
            <person name="Squares R."/>
            <person name="Squares S."/>
            <person name="Stevens K."/>
            <person name="Taylor K."/>
            <person name="Taylor R.G."/>
            <person name="Tivey A."/>
            <person name="Walsh S.V."/>
            <person name="Warren T."/>
            <person name="Whitehead S."/>
            <person name="Woodward J.R."/>
            <person name="Volckaert G."/>
            <person name="Aert R."/>
            <person name="Robben J."/>
            <person name="Grymonprez B."/>
            <person name="Weltjens I."/>
            <person name="Vanstreels E."/>
            <person name="Rieger M."/>
            <person name="Schaefer M."/>
            <person name="Mueller-Auer S."/>
            <person name="Gabel C."/>
            <person name="Fuchs M."/>
            <person name="Duesterhoeft A."/>
            <person name="Fritzc C."/>
            <person name="Holzer E."/>
            <person name="Moestl D."/>
            <person name="Hilbert H."/>
            <person name="Borzym K."/>
            <person name="Langer I."/>
            <person name="Beck A."/>
            <person name="Lehrach H."/>
            <person name="Reinhardt R."/>
            <person name="Pohl T.M."/>
            <person name="Eger P."/>
            <person name="Zimmermann W."/>
            <person name="Wedler H."/>
            <person name="Wambutt R."/>
            <person name="Purnelle B."/>
            <person name="Goffeau A."/>
            <person name="Cadieu E."/>
            <person name="Dreano S."/>
            <person name="Gloux S."/>
            <person name="Lelaure V."/>
            <person name="Mottier S."/>
            <person name="Galibert F."/>
            <person name="Aves S.J."/>
            <person name="Xiang Z."/>
            <person name="Hunt C."/>
            <person name="Moore K."/>
            <person name="Hurst S.M."/>
            <person name="Lucas M."/>
            <person name="Rochet M."/>
            <person name="Gaillardin C."/>
            <person name="Tallada V.A."/>
            <person name="Garzon A."/>
            <person name="Thode G."/>
            <person name="Daga R.R."/>
            <person name="Cruzado L."/>
            <person name="Jimenez J."/>
            <person name="Sanchez M."/>
            <person name="del Rey F."/>
            <person name="Benito J."/>
            <person name="Dominguez A."/>
            <person name="Revuelta J.L."/>
            <person name="Moreno S."/>
            <person name="Armstrong J."/>
            <person name="Forsburg S.L."/>
            <person name="Cerutti L."/>
            <person name="Lowe T."/>
            <person name="McCombie W.R."/>
            <person name="Paulsen I."/>
            <person name="Potashkin J."/>
            <person name="Shpakovski G.V."/>
            <person name="Ussery D."/>
            <person name="Barrell B.G."/>
            <person name="Nurse P."/>
        </authorList>
    </citation>
    <scope>NUCLEOTIDE SEQUENCE [LARGE SCALE GENOMIC DNA]</scope>
    <source>
        <strain>972 / ATCC 24843</strain>
    </source>
</reference>
<accession>O13785</accession>
<organism>
    <name type="scientific">Schizosaccharomyces pombe (strain 972 / ATCC 24843)</name>
    <name type="common">Fission yeast</name>
    <dbReference type="NCBI Taxonomy" id="284812"/>
    <lineage>
        <taxon>Eukaryota</taxon>
        <taxon>Fungi</taxon>
        <taxon>Dikarya</taxon>
        <taxon>Ascomycota</taxon>
        <taxon>Taphrinomycotina</taxon>
        <taxon>Schizosaccharomycetes</taxon>
        <taxon>Schizosaccharomycetales</taxon>
        <taxon>Schizosaccharomycetaceae</taxon>
        <taxon>Schizosaccharomyces</taxon>
    </lineage>
</organism>
<keyword id="KW-0256">Endoplasmic reticulum</keyword>
<keyword id="KW-0931">ER-Golgi transport</keyword>
<keyword id="KW-0472">Membrane</keyword>
<keyword id="KW-0653">Protein transport</keyword>
<keyword id="KW-1185">Reference proteome</keyword>
<keyword id="KW-0812">Transmembrane</keyword>
<keyword id="KW-1133">Transmembrane helix</keyword>
<keyword id="KW-0813">Transport</keyword>
<comment type="function">
    <text evidence="1">SNARE required for targeting and fusion of Golgi-derived retrograde transport vesicles with the ER.</text>
</comment>
<comment type="subunit">
    <text evidence="1">Component of a SNARE complex consisting of ufe1, use1, sec20 and sec22 or ykt6.</text>
</comment>
<comment type="subcellular location">
    <subcellularLocation>
        <location evidence="1">Endoplasmic reticulum membrane</location>
        <topology evidence="1">Single-pass type IV membrane protein</topology>
    </subcellularLocation>
</comment>
<comment type="similarity">
    <text evidence="3">Belongs to the USE1 family.</text>
</comment>
<dbReference type="EMBL" id="CU329670">
    <property type="protein sequence ID" value="CAB16218.1"/>
    <property type="molecule type" value="Genomic_DNA"/>
</dbReference>
<dbReference type="PIR" id="T37839">
    <property type="entry name" value="T37839"/>
</dbReference>
<dbReference type="RefSeq" id="NP_594254.1">
    <property type="nucleotide sequence ID" value="NM_001019677.2"/>
</dbReference>
<dbReference type="SMR" id="O13785"/>
<dbReference type="BioGRID" id="278861">
    <property type="interactions" value="3"/>
</dbReference>
<dbReference type="FunCoup" id="O13785">
    <property type="interactions" value="13"/>
</dbReference>
<dbReference type="STRING" id="284812.O13785"/>
<dbReference type="iPTMnet" id="O13785"/>
<dbReference type="PaxDb" id="4896-SPAC17G6.07c.1"/>
<dbReference type="EnsemblFungi" id="SPAC17G6.07c.1">
    <property type="protein sequence ID" value="SPAC17G6.07c.1:pep"/>
    <property type="gene ID" value="SPAC17G6.07c"/>
</dbReference>
<dbReference type="GeneID" id="2542397"/>
<dbReference type="KEGG" id="spo:2542397"/>
<dbReference type="PomBase" id="SPAC17G6.07c">
    <property type="gene designation" value="use1"/>
</dbReference>
<dbReference type="VEuPathDB" id="FungiDB:SPAC17G6.07c"/>
<dbReference type="eggNOG" id="KOG2678">
    <property type="taxonomic scope" value="Eukaryota"/>
</dbReference>
<dbReference type="HOGENOM" id="CLU_1251310_0_0_1"/>
<dbReference type="InParanoid" id="O13785"/>
<dbReference type="OMA" id="WEEGKCQ"/>
<dbReference type="PhylomeDB" id="O13785"/>
<dbReference type="Reactome" id="R-SPO-6811434">
    <property type="pathway name" value="COPI-dependent Golgi-to-ER retrograde traffic"/>
</dbReference>
<dbReference type="PRO" id="PR:O13785"/>
<dbReference type="Proteomes" id="UP000002485">
    <property type="component" value="Chromosome I"/>
</dbReference>
<dbReference type="GO" id="GO:0005783">
    <property type="term" value="C:endoplasmic reticulum"/>
    <property type="evidence" value="ECO:0007005"/>
    <property type="project" value="PomBase"/>
</dbReference>
<dbReference type="GO" id="GO:0005789">
    <property type="term" value="C:endoplasmic reticulum membrane"/>
    <property type="evidence" value="ECO:0000250"/>
    <property type="project" value="PomBase"/>
</dbReference>
<dbReference type="GO" id="GO:0031201">
    <property type="term" value="C:SNARE complex"/>
    <property type="evidence" value="ECO:0000318"/>
    <property type="project" value="GO_Central"/>
</dbReference>
<dbReference type="GO" id="GO:0005484">
    <property type="term" value="F:SNAP receptor activity"/>
    <property type="evidence" value="ECO:0000318"/>
    <property type="project" value="GO_Central"/>
</dbReference>
<dbReference type="GO" id="GO:0006886">
    <property type="term" value="P:intracellular protein transport"/>
    <property type="evidence" value="ECO:0000303"/>
    <property type="project" value="PomBase"/>
</dbReference>
<dbReference type="GO" id="GO:0006890">
    <property type="term" value="P:retrograde vesicle-mediated transport, Golgi to endoplasmic reticulum"/>
    <property type="evidence" value="ECO:0000318"/>
    <property type="project" value="GO_Central"/>
</dbReference>
<dbReference type="CDD" id="cd15860">
    <property type="entry name" value="SNARE_USE1"/>
    <property type="match status" value="1"/>
</dbReference>
<dbReference type="InterPro" id="IPR019150">
    <property type="entry name" value="Vesicle_transport_protein_Use1"/>
</dbReference>
<dbReference type="PANTHER" id="PTHR13050">
    <property type="entry name" value="USE1-LIKE PROTEIN"/>
    <property type="match status" value="1"/>
</dbReference>
<dbReference type="PANTHER" id="PTHR13050:SF7">
    <property type="entry name" value="VESICLE TRANSPORT PROTEIN USE1"/>
    <property type="match status" value="1"/>
</dbReference>
<dbReference type="Pfam" id="PF09753">
    <property type="entry name" value="Use1"/>
    <property type="match status" value="1"/>
</dbReference>
<protein>
    <recommendedName>
        <fullName>Protein transport protein use1</fullName>
    </recommendedName>
</protein>
<feature type="chain" id="PRO_0000116727" description="Protein transport protein use1">
    <location>
        <begin position="1"/>
        <end position="222"/>
    </location>
</feature>
<feature type="topological domain" description="Cytoplasmic" evidence="2">
    <location>
        <begin position="1"/>
        <end position="193"/>
    </location>
</feature>
<feature type="transmembrane region" description="Helical; Anchor for type IV membrane protein" evidence="2">
    <location>
        <begin position="194"/>
        <end position="214"/>
    </location>
</feature>
<feature type="topological domain" description="Lumenal" evidence="2">
    <location>
        <begin position="215"/>
        <end position="222"/>
    </location>
</feature>
<name>USE1_SCHPO</name>
<sequence>MSKDLISRLERQFKLKRDEFQDPLELLKFEKNLDYARKLLWEEGKCQLDKVAEPQGLSKRIMDLQGRIYDLNVTMEKKLKIEEKKIKSKQEKEIAHALQSIQERELRERQQMSNVEASNAQLLTNQRSMQTEISESLLHLASVLKENALSFTNALVTDNQVVERTGSLLDKNAHSLRHANHGVQSYSKSKRLSFWLQLGMIIAVVVSFIVMIFILQFTKNQN</sequence>